<feature type="chain" id="PRO_0000158078" description="MIF-like protein mif-2">
    <location>
        <begin position="1"/>
        <end position="120"/>
    </location>
</feature>
<sequence>MPMVRVATNLPNEKVPVDFEIRLTDLLARSMGKPRERIAVEIAAGARLVHGATHDPVTVISIKSIGAVSAEDNIRNTAAITEFCGKELGLPKDKVVITFHDLPPATVGFNGTTVAEANKK</sequence>
<accession>Q18785</accession>
<comment type="similarity">
    <text evidence="1">Belongs to the MIF family.</text>
</comment>
<name>MIF2_CAEEL</name>
<dbReference type="EMBL" id="Z78012">
    <property type="protein sequence ID" value="CAB01412.1"/>
    <property type="molecule type" value="Genomic_DNA"/>
</dbReference>
<dbReference type="PIR" id="T20150">
    <property type="entry name" value="T20150"/>
</dbReference>
<dbReference type="RefSeq" id="NP_001256386.1">
    <property type="nucleotide sequence ID" value="NM_001269457.1"/>
</dbReference>
<dbReference type="RefSeq" id="NP_001366841.1">
    <property type="nucleotide sequence ID" value="NM_001380779.1"/>
</dbReference>
<dbReference type="SMR" id="Q18785"/>
<dbReference type="BioGRID" id="44662">
    <property type="interactions" value="2"/>
</dbReference>
<dbReference type="FunCoup" id="Q18785">
    <property type="interactions" value="47"/>
</dbReference>
<dbReference type="STRING" id="6239.C52E4.2c.1"/>
<dbReference type="PaxDb" id="6239-C52E4.2c"/>
<dbReference type="PeptideAtlas" id="Q18785"/>
<dbReference type="EnsemblMetazoa" id="C52E4.2a.1">
    <property type="protein sequence ID" value="C52E4.2a.1"/>
    <property type="gene ID" value="WBGene00003235"/>
</dbReference>
<dbReference type="EnsemblMetazoa" id="C52E4.2a.2">
    <property type="protein sequence ID" value="C52E4.2a.2"/>
    <property type="gene ID" value="WBGene00003235"/>
</dbReference>
<dbReference type="GeneID" id="179638"/>
<dbReference type="UCSC" id="C52E4.2">
    <property type="organism name" value="c. elegans"/>
</dbReference>
<dbReference type="AGR" id="WB:WBGene00003235"/>
<dbReference type="WormBase" id="C52E4.2a">
    <property type="protein sequence ID" value="CE08944"/>
    <property type="gene ID" value="WBGene00003235"/>
    <property type="gene designation" value="mif-2"/>
</dbReference>
<dbReference type="eggNOG" id="KOG1759">
    <property type="taxonomic scope" value="Eukaryota"/>
</dbReference>
<dbReference type="HOGENOM" id="CLU_129906_2_2_1"/>
<dbReference type="InParanoid" id="Q18785"/>
<dbReference type="OrthoDB" id="6495239at2759"/>
<dbReference type="PhylomeDB" id="Q18785"/>
<dbReference type="PRO" id="PR:Q18785"/>
<dbReference type="Proteomes" id="UP000001940">
    <property type="component" value="Chromosome V"/>
</dbReference>
<dbReference type="Bgee" id="WBGene00003235">
    <property type="expression patterns" value="Expressed in pharyngeal muscle cell (C elegans) and 4 other cell types or tissues"/>
</dbReference>
<dbReference type="ExpressionAtlas" id="Q18785">
    <property type="expression patterns" value="baseline and differential"/>
</dbReference>
<dbReference type="GO" id="GO:0005615">
    <property type="term" value="C:extracellular space"/>
    <property type="evidence" value="ECO:0000318"/>
    <property type="project" value="GO_Central"/>
</dbReference>
<dbReference type="GO" id="GO:0005125">
    <property type="term" value="F:cytokine activity"/>
    <property type="evidence" value="ECO:0000318"/>
    <property type="project" value="GO_Central"/>
</dbReference>
<dbReference type="GO" id="GO:0050178">
    <property type="term" value="F:phenylpyruvate tautomerase activity"/>
    <property type="evidence" value="ECO:0000318"/>
    <property type="project" value="GO_Central"/>
</dbReference>
<dbReference type="Gene3D" id="3.30.429.10">
    <property type="entry name" value="Macrophage Migration Inhibitory Factor"/>
    <property type="match status" value="1"/>
</dbReference>
<dbReference type="InterPro" id="IPR001398">
    <property type="entry name" value="Macrophage_inhib_fac"/>
</dbReference>
<dbReference type="InterPro" id="IPR019829">
    <property type="entry name" value="Macrophage_inhib_fac_CS"/>
</dbReference>
<dbReference type="InterPro" id="IPR014347">
    <property type="entry name" value="Tautomerase/MIF_sf"/>
</dbReference>
<dbReference type="PANTHER" id="PTHR11954">
    <property type="entry name" value="D-DOPACHROME DECARBOXYLASE"/>
    <property type="match status" value="1"/>
</dbReference>
<dbReference type="PANTHER" id="PTHR11954:SF37">
    <property type="entry name" value="MIF-LIKE PROTEIN MIF-2"/>
    <property type="match status" value="1"/>
</dbReference>
<dbReference type="Pfam" id="PF01187">
    <property type="entry name" value="MIF"/>
    <property type="match status" value="1"/>
</dbReference>
<dbReference type="SUPFAM" id="SSF55331">
    <property type="entry name" value="Tautomerase/MIF"/>
    <property type="match status" value="1"/>
</dbReference>
<dbReference type="PROSITE" id="PS01158">
    <property type="entry name" value="MIF"/>
    <property type="match status" value="1"/>
</dbReference>
<reference key="1">
    <citation type="journal article" date="1998" name="Science">
        <title>Genome sequence of the nematode C. elegans: a platform for investigating biology.</title>
        <authorList>
            <consortium name="The C. elegans sequencing consortium"/>
        </authorList>
    </citation>
    <scope>NUCLEOTIDE SEQUENCE [LARGE SCALE GENOMIC DNA]</scope>
    <source>
        <strain>Bristol N2</strain>
    </source>
</reference>
<keyword id="KW-1185">Reference proteome</keyword>
<gene>
    <name type="primary">mif-2</name>
    <name type="ORF">C52E4.2</name>
</gene>
<proteinExistence type="inferred from homology"/>
<organism>
    <name type="scientific">Caenorhabditis elegans</name>
    <dbReference type="NCBI Taxonomy" id="6239"/>
    <lineage>
        <taxon>Eukaryota</taxon>
        <taxon>Metazoa</taxon>
        <taxon>Ecdysozoa</taxon>
        <taxon>Nematoda</taxon>
        <taxon>Chromadorea</taxon>
        <taxon>Rhabditida</taxon>
        <taxon>Rhabditina</taxon>
        <taxon>Rhabditomorpha</taxon>
        <taxon>Rhabditoidea</taxon>
        <taxon>Rhabditidae</taxon>
        <taxon>Peloderinae</taxon>
        <taxon>Caenorhabditis</taxon>
    </lineage>
</organism>
<evidence type="ECO:0000305" key="1"/>
<protein>
    <recommendedName>
        <fullName>MIF-like protein mif-2</fullName>
    </recommendedName>
</protein>